<proteinExistence type="inferred from homology"/>
<comment type="function">
    <text evidence="1">Key enzyme in the regulation of glycerol uptake and metabolism. Catalyzes the phosphorylation of glycerol to yield sn-glycerol 3-phosphate.</text>
</comment>
<comment type="catalytic activity">
    <reaction evidence="1">
        <text>glycerol + ATP = sn-glycerol 3-phosphate + ADP + H(+)</text>
        <dbReference type="Rhea" id="RHEA:21644"/>
        <dbReference type="ChEBI" id="CHEBI:15378"/>
        <dbReference type="ChEBI" id="CHEBI:17754"/>
        <dbReference type="ChEBI" id="CHEBI:30616"/>
        <dbReference type="ChEBI" id="CHEBI:57597"/>
        <dbReference type="ChEBI" id="CHEBI:456216"/>
        <dbReference type="EC" id="2.7.1.30"/>
    </reaction>
</comment>
<comment type="activity regulation">
    <text evidence="1">Inhibited by fructose 1,6-bisphosphate (FBP).</text>
</comment>
<comment type="pathway">
    <text evidence="1">Polyol metabolism; glycerol degradation via glycerol kinase pathway; sn-glycerol 3-phosphate from glycerol: step 1/1.</text>
</comment>
<comment type="similarity">
    <text evidence="1">Belongs to the FGGY kinase family.</text>
</comment>
<keyword id="KW-0067">ATP-binding</keyword>
<keyword id="KW-0319">Glycerol metabolism</keyword>
<keyword id="KW-0418">Kinase</keyword>
<keyword id="KW-0547">Nucleotide-binding</keyword>
<keyword id="KW-0808">Transferase</keyword>
<organism>
    <name type="scientific">Brucella suis biovar 1 (strain 1330)</name>
    <dbReference type="NCBI Taxonomy" id="204722"/>
    <lineage>
        <taxon>Bacteria</taxon>
        <taxon>Pseudomonadati</taxon>
        <taxon>Pseudomonadota</taxon>
        <taxon>Alphaproteobacteria</taxon>
        <taxon>Hyphomicrobiales</taxon>
        <taxon>Brucellaceae</taxon>
        <taxon>Brucella/Ochrobactrum group</taxon>
        <taxon>Brucella</taxon>
    </lineage>
</organism>
<gene>
    <name evidence="1" type="primary">glpK</name>
    <name type="ordered locus">BRA0443</name>
    <name type="ordered locus">BS1330_II0440</name>
</gene>
<protein>
    <recommendedName>
        <fullName evidence="1">Glycerol kinase</fullName>
        <ecNumber evidence="1">2.7.1.30</ecNumber>
    </recommendedName>
    <alternativeName>
        <fullName evidence="1">ATP:glycerol 3-phosphotransferase</fullName>
    </alternativeName>
    <alternativeName>
        <fullName evidence="1">Glycerokinase</fullName>
        <shortName evidence="1">GK</shortName>
    </alternativeName>
</protein>
<reference key="1">
    <citation type="journal article" date="2002" name="Proc. Natl. Acad. Sci. U.S.A.">
        <title>The Brucella suis genome reveals fundamental similarities between animal and plant pathogens and symbionts.</title>
        <authorList>
            <person name="Paulsen I.T."/>
            <person name="Seshadri R."/>
            <person name="Nelson K.E."/>
            <person name="Eisen J.A."/>
            <person name="Heidelberg J.F."/>
            <person name="Read T.D."/>
            <person name="Dodson R.J."/>
            <person name="Umayam L.A."/>
            <person name="Brinkac L.M."/>
            <person name="Beanan M.J."/>
            <person name="Daugherty S.C."/>
            <person name="DeBoy R.T."/>
            <person name="Durkin A.S."/>
            <person name="Kolonay J.F."/>
            <person name="Madupu R."/>
            <person name="Nelson W.C."/>
            <person name="Ayodeji B."/>
            <person name="Kraul M."/>
            <person name="Shetty J."/>
            <person name="Malek J.A."/>
            <person name="Van Aken S.E."/>
            <person name="Riedmuller S."/>
            <person name="Tettelin H."/>
            <person name="Gill S.R."/>
            <person name="White O."/>
            <person name="Salzberg S.L."/>
            <person name="Hoover D.L."/>
            <person name="Lindler L.E."/>
            <person name="Halling S.M."/>
            <person name="Boyle S.M."/>
            <person name="Fraser C.M."/>
        </authorList>
    </citation>
    <scope>NUCLEOTIDE SEQUENCE [LARGE SCALE GENOMIC DNA]</scope>
    <source>
        <strain>1330</strain>
    </source>
</reference>
<reference key="2">
    <citation type="journal article" date="2011" name="J. Bacteriol.">
        <title>Revised genome sequence of Brucella suis 1330.</title>
        <authorList>
            <person name="Tae H."/>
            <person name="Shallom S."/>
            <person name="Settlage R."/>
            <person name="Preston D."/>
            <person name="Adams L.G."/>
            <person name="Garner H.R."/>
        </authorList>
    </citation>
    <scope>NUCLEOTIDE SEQUENCE [LARGE SCALE GENOMIC DNA]</scope>
    <source>
        <strain>1330</strain>
    </source>
</reference>
<feature type="chain" id="PRO_0000059441" description="Glycerol kinase">
    <location>
        <begin position="1"/>
        <end position="498"/>
    </location>
</feature>
<feature type="binding site" evidence="1">
    <location>
        <position position="12"/>
    </location>
    <ligand>
        <name>ADP</name>
        <dbReference type="ChEBI" id="CHEBI:456216"/>
    </ligand>
</feature>
<feature type="binding site" evidence="1">
    <location>
        <position position="12"/>
    </location>
    <ligand>
        <name>ATP</name>
        <dbReference type="ChEBI" id="CHEBI:30616"/>
    </ligand>
</feature>
<feature type="binding site" evidence="1">
    <location>
        <position position="12"/>
    </location>
    <ligand>
        <name>sn-glycerol 3-phosphate</name>
        <dbReference type="ChEBI" id="CHEBI:57597"/>
    </ligand>
</feature>
<feature type="binding site" evidence="1">
    <location>
        <position position="13"/>
    </location>
    <ligand>
        <name>ATP</name>
        <dbReference type="ChEBI" id="CHEBI:30616"/>
    </ligand>
</feature>
<feature type="binding site" evidence="1">
    <location>
        <position position="14"/>
    </location>
    <ligand>
        <name>ATP</name>
        <dbReference type="ChEBI" id="CHEBI:30616"/>
    </ligand>
</feature>
<feature type="binding site" evidence="1">
    <location>
        <position position="16"/>
    </location>
    <ligand>
        <name>ADP</name>
        <dbReference type="ChEBI" id="CHEBI:456216"/>
    </ligand>
</feature>
<feature type="binding site" evidence="1">
    <location>
        <position position="82"/>
    </location>
    <ligand>
        <name>glycerol</name>
        <dbReference type="ChEBI" id="CHEBI:17754"/>
    </ligand>
</feature>
<feature type="binding site" evidence="1">
    <location>
        <position position="82"/>
    </location>
    <ligand>
        <name>sn-glycerol 3-phosphate</name>
        <dbReference type="ChEBI" id="CHEBI:57597"/>
    </ligand>
</feature>
<feature type="binding site" evidence="1">
    <location>
        <position position="83"/>
    </location>
    <ligand>
        <name>glycerol</name>
        <dbReference type="ChEBI" id="CHEBI:17754"/>
    </ligand>
</feature>
<feature type="binding site" evidence="1">
    <location>
        <position position="83"/>
    </location>
    <ligand>
        <name>sn-glycerol 3-phosphate</name>
        <dbReference type="ChEBI" id="CHEBI:57597"/>
    </ligand>
</feature>
<feature type="binding site" evidence="1">
    <location>
        <position position="134"/>
    </location>
    <ligand>
        <name>glycerol</name>
        <dbReference type="ChEBI" id="CHEBI:17754"/>
    </ligand>
</feature>
<feature type="binding site" evidence="1">
    <location>
        <position position="134"/>
    </location>
    <ligand>
        <name>sn-glycerol 3-phosphate</name>
        <dbReference type="ChEBI" id="CHEBI:57597"/>
    </ligand>
</feature>
<feature type="binding site" evidence="1">
    <location>
        <position position="243"/>
    </location>
    <ligand>
        <name>glycerol</name>
        <dbReference type="ChEBI" id="CHEBI:17754"/>
    </ligand>
</feature>
<feature type="binding site" evidence="1">
    <location>
        <position position="243"/>
    </location>
    <ligand>
        <name>sn-glycerol 3-phosphate</name>
        <dbReference type="ChEBI" id="CHEBI:57597"/>
    </ligand>
</feature>
<feature type="binding site" evidence="1">
    <location>
        <position position="244"/>
    </location>
    <ligand>
        <name>glycerol</name>
        <dbReference type="ChEBI" id="CHEBI:17754"/>
    </ligand>
</feature>
<feature type="binding site" evidence="1">
    <location>
        <position position="265"/>
    </location>
    <ligand>
        <name>ADP</name>
        <dbReference type="ChEBI" id="CHEBI:456216"/>
    </ligand>
</feature>
<feature type="binding site" evidence="1">
    <location>
        <position position="265"/>
    </location>
    <ligand>
        <name>ATP</name>
        <dbReference type="ChEBI" id="CHEBI:30616"/>
    </ligand>
</feature>
<feature type="binding site" evidence="1">
    <location>
        <position position="308"/>
    </location>
    <ligand>
        <name>ADP</name>
        <dbReference type="ChEBI" id="CHEBI:456216"/>
    </ligand>
</feature>
<feature type="binding site" evidence="1">
    <location>
        <position position="308"/>
    </location>
    <ligand>
        <name>ATP</name>
        <dbReference type="ChEBI" id="CHEBI:30616"/>
    </ligand>
</feature>
<feature type="binding site" evidence="1">
    <location>
        <position position="312"/>
    </location>
    <ligand>
        <name>ATP</name>
        <dbReference type="ChEBI" id="CHEBI:30616"/>
    </ligand>
</feature>
<feature type="binding site" evidence="1">
    <location>
        <position position="411"/>
    </location>
    <ligand>
        <name>ADP</name>
        <dbReference type="ChEBI" id="CHEBI:456216"/>
    </ligand>
</feature>
<feature type="binding site" evidence="1">
    <location>
        <position position="411"/>
    </location>
    <ligand>
        <name>ATP</name>
        <dbReference type="ChEBI" id="CHEBI:30616"/>
    </ligand>
</feature>
<sequence>MSGYILAIDQGTTSTRSMLFDRNMRVVGLGQQEFTQHFPSSGWVEHDAEEIWKSVQSTIRIALAQAGISAADVAAIGITNQRETTVVWDRISGKPVHRAIVWQDRRTAQFCDELKRRNLEPLFTEKTGLLLDPYFSGTKLAWLLNHVPGLRERAQKGQVCFGTIDSWLIYKLTGGKAHVTDATNASRTLIYHIGENRWDDELLDILGIPAAMLPEVKDCAADFGMTDPALFGVSIPILGVAGDQQTAVIGNACFEPGMMKSTYGTGCFALLNTGTDRVTSSNRLLTTIAYRLDGVTTYALEGSIFIAGAAVQWLRDEMGFISVVSEVSALAEKADPNQRIYLVPAFTGLGAPYWDAEARGAIFGLTRGTGRAEFARAALESVAYQTFDLLEAMQGDWKGATNHTVLRVDGGMVASDWTMQRLADILNAPVDRPVFLETTVLGAAWLAASRAGIWPDRKGFSERWQRDCRFEPAMPEKERESAIAGWRDSVSRCLTRPQ</sequence>
<name>GLPK_BRUSU</name>
<dbReference type="EC" id="2.7.1.30" evidence="1"/>
<dbReference type="EMBL" id="AE014292">
    <property type="protein sequence ID" value="AAN33637.1"/>
    <property type="molecule type" value="Genomic_DNA"/>
</dbReference>
<dbReference type="EMBL" id="CP002998">
    <property type="protein sequence ID" value="AEM19916.1"/>
    <property type="molecule type" value="Genomic_DNA"/>
</dbReference>
<dbReference type="RefSeq" id="WP_006191892.1">
    <property type="nucleotide sequence ID" value="NC_004311.2"/>
</dbReference>
<dbReference type="SMR" id="Q8FWK8"/>
<dbReference type="GeneID" id="45053496"/>
<dbReference type="KEGG" id="bms:BRA0443"/>
<dbReference type="KEGG" id="bsi:BS1330_II0440"/>
<dbReference type="PATRIC" id="fig|204722.22.peg.3230"/>
<dbReference type="HOGENOM" id="CLU_009281_2_3_5"/>
<dbReference type="UniPathway" id="UPA00618">
    <property type="reaction ID" value="UER00672"/>
</dbReference>
<dbReference type="PRO" id="PR:Q8FWK8"/>
<dbReference type="Proteomes" id="UP000007104">
    <property type="component" value="Chromosome II"/>
</dbReference>
<dbReference type="GO" id="GO:0005829">
    <property type="term" value="C:cytosol"/>
    <property type="evidence" value="ECO:0007669"/>
    <property type="project" value="TreeGrafter"/>
</dbReference>
<dbReference type="GO" id="GO:0005524">
    <property type="term" value="F:ATP binding"/>
    <property type="evidence" value="ECO:0007669"/>
    <property type="project" value="UniProtKB-UniRule"/>
</dbReference>
<dbReference type="GO" id="GO:0004370">
    <property type="term" value="F:glycerol kinase activity"/>
    <property type="evidence" value="ECO:0000250"/>
    <property type="project" value="UniProtKB"/>
</dbReference>
<dbReference type="GO" id="GO:0019563">
    <property type="term" value="P:glycerol catabolic process"/>
    <property type="evidence" value="ECO:0007669"/>
    <property type="project" value="UniProtKB-UniRule"/>
</dbReference>
<dbReference type="GO" id="GO:0006071">
    <property type="term" value="P:glycerol metabolic process"/>
    <property type="evidence" value="ECO:0000250"/>
    <property type="project" value="UniProtKB"/>
</dbReference>
<dbReference type="GO" id="GO:0006072">
    <property type="term" value="P:glycerol-3-phosphate metabolic process"/>
    <property type="evidence" value="ECO:0007669"/>
    <property type="project" value="InterPro"/>
</dbReference>
<dbReference type="CDD" id="cd07786">
    <property type="entry name" value="FGGY_EcGK_like"/>
    <property type="match status" value="1"/>
</dbReference>
<dbReference type="FunFam" id="3.30.420.40:FF:000007">
    <property type="entry name" value="Glycerol kinase"/>
    <property type="match status" value="1"/>
</dbReference>
<dbReference type="FunFam" id="3.30.420.40:FF:000008">
    <property type="entry name" value="Glycerol kinase"/>
    <property type="match status" value="1"/>
</dbReference>
<dbReference type="Gene3D" id="3.30.420.40">
    <property type="match status" value="2"/>
</dbReference>
<dbReference type="HAMAP" id="MF_00186">
    <property type="entry name" value="Glycerol_kin"/>
    <property type="match status" value="1"/>
</dbReference>
<dbReference type="InterPro" id="IPR043129">
    <property type="entry name" value="ATPase_NBD"/>
</dbReference>
<dbReference type="InterPro" id="IPR000577">
    <property type="entry name" value="Carb_kinase_FGGY"/>
</dbReference>
<dbReference type="InterPro" id="IPR018483">
    <property type="entry name" value="Carb_kinase_FGGY_CS"/>
</dbReference>
<dbReference type="InterPro" id="IPR018485">
    <property type="entry name" value="FGGY_C"/>
</dbReference>
<dbReference type="InterPro" id="IPR018484">
    <property type="entry name" value="FGGY_N"/>
</dbReference>
<dbReference type="InterPro" id="IPR005999">
    <property type="entry name" value="Glycerol_kin"/>
</dbReference>
<dbReference type="NCBIfam" id="TIGR01311">
    <property type="entry name" value="glycerol_kin"/>
    <property type="match status" value="1"/>
</dbReference>
<dbReference type="NCBIfam" id="NF000756">
    <property type="entry name" value="PRK00047.1"/>
    <property type="match status" value="1"/>
</dbReference>
<dbReference type="PANTHER" id="PTHR10196:SF78">
    <property type="entry name" value="GLYCEROL KINASE"/>
    <property type="match status" value="1"/>
</dbReference>
<dbReference type="PANTHER" id="PTHR10196">
    <property type="entry name" value="SUGAR KINASE"/>
    <property type="match status" value="1"/>
</dbReference>
<dbReference type="Pfam" id="PF02782">
    <property type="entry name" value="FGGY_C"/>
    <property type="match status" value="1"/>
</dbReference>
<dbReference type="Pfam" id="PF00370">
    <property type="entry name" value="FGGY_N"/>
    <property type="match status" value="1"/>
</dbReference>
<dbReference type="PIRSF" id="PIRSF000538">
    <property type="entry name" value="GlpK"/>
    <property type="match status" value="1"/>
</dbReference>
<dbReference type="SUPFAM" id="SSF53067">
    <property type="entry name" value="Actin-like ATPase domain"/>
    <property type="match status" value="2"/>
</dbReference>
<dbReference type="PROSITE" id="PS00933">
    <property type="entry name" value="FGGY_KINASES_1"/>
    <property type="match status" value="1"/>
</dbReference>
<dbReference type="PROSITE" id="PS00445">
    <property type="entry name" value="FGGY_KINASES_2"/>
    <property type="match status" value="1"/>
</dbReference>
<accession>Q8FWK8</accession>
<accession>G0KCH8</accession>
<evidence type="ECO:0000255" key="1">
    <source>
        <dbReference type="HAMAP-Rule" id="MF_00186"/>
    </source>
</evidence>